<keyword id="KW-0021">Allosteric enzyme</keyword>
<keyword id="KW-0067">ATP-binding</keyword>
<keyword id="KW-0418">Kinase</keyword>
<keyword id="KW-0547">Nucleotide-binding</keyword>
<keyword id="KW-1185">Reference proteome</keyword>
<keyword id="KW-0808">Transferase</keyword>
<dbReference type="EC" id="2.7.14.1" evidence="1"/>
<dbReference type="EMBL" id="AE016877">
    <property type="protein sequence ID" value="AAP07183.1"/>
    <property type="molecule type" value="Genomic_DNA"/>
</dbReference>
<dbReference type="RefSeq" id="NP_829982.1">
    <property type="nucleotide sequence ID" value="NC_004722.1"/>
</dbReference>
<dbReference type="RefSeq" id="WP_000050842.1">
    <property type="nucleotide sequence ID" value="NZ_CP138336.1"/>
</dbReference>
<dbReference type="SMR" id="Q81J67"/>
<dbReference type="STRING" id="226900.BC_0101"/>
<dbReference type="KEGG" id="bce:BC0101"/>
<dbReference type="PATRIC" id="fig|226900.8.peg.103"/>
<dbReference type="HOGENOM" id="CLU_066591_1_0_9"/>
<dbReference type="OrthoDB" id="9791353at2"/>
<dbReference type="Proteomes" id="UP000001417">
    <property type="component" value="Chromosome"/>
</dbReference>
<dbReference type="GO" id="GO:0005615">
    <property type="term" value="C:extracellular space"/>
    <property type="evidence" value="ECO:0000318"/>
    <property type="project" value="GO_Central"/>
</dbReference>
<dbReference type="GO" id="GO:0005524">
    <property type="term" value="F:ATP binding"/>
    <property type="evidence" value="ECO:0007669"/>
    <property type="project" value="UniProtKB-KW"/>
</dbReference>
<dbReference type="GO" id="GO:0004111">
    <property type="term" value="F:creatine kinase activity"/>
    <property type="evidence" value="ECO:0007669"/>
    <property type="project" value="InterPro"/>
</dbReference>
<dbReference type="GO" id="GO:0016301">
    <property type="term" value="F:kinase activity"/>
    <property type="evidence" value="ECO:0000318"/>
    <property type="project" value="GO_Central"/>
</dbReference>
<dbReference type="GO" id="GO:0004672">
    <property type="term" value="F:protein kinase activity"/>
    <property type="evidence" value="ECO:0007669"/>
    <property type="project" value="UniProtKB-UniRule"/>
</dbReference>
<dbReference type="GO" id="GO:0046314">
    <property type="term" value="P:phosphocreatine biosynthetic process"/>
    <property type="evidence" value="ECO:0007669"/>
    <property type="project" value="InterPro"/>
</dbReference>
<dbReference type="CDD" id="cd07930">
    <property type="entry name" value="bacterial_phosphagen_kinase"/>
    <property type="match status" value="1"/>
</dbReference>
<dbReference type="FunFam" id="3.30.590.10:FF:000007">
    <property type="entry name" value="Protein-arginine kinase"/>
    <property type="match status" value="1"/>
</dbReference>
<dbReference type="Gene3D" id="3.30.590.10">
    <property type="entry name" value="Glutamine synthetase/guanido kinase, catalytic domain"/>
    <property type="match status" value="1"/>
</dbReference>
<dbReference type="HAMAP" id="MF_00602">
    <property type="entry name" value="Prot_Arg_kinase"/>
    <property type="match status" value="1"/>
</dbReference>
<dbReference type="InterPro" id="IPR023660">
    <property type="entry name" value="Arg_Kinase"/>
</dbReference>
<dbReference type="InterPro" id="IPR000749">
    <property type="entry name" value="ATP-guanido_PTrfase"/>
</dbReference>
<dbReference type="InterPro" id="IPR022415">
    <property type="entry name" value="ATP-guanido_PTrfase_AS"/>
</dbReference>
<dbReference type="InterPro" id="IPR022414">
    <property type="entry name" value="ATP-guanido_PTrfase_cat"/>
</dbReference>
<dbReference type="InterPro" id="IPR014746">
    <property type="entry name" value="Gln_synth/guanido_kin_cat_dom"/>
</dbReference>
<dbReference type="NCBIfam" id="NF002194">
    <property type="entry name" value="PRK01059.1-4"/>
    <property type="match status" value="1"/>
</dbReference>
<dbReference type="NCBIfam" id="NF002195">
    <property type="entry name" value="PRK01059.1-5"/>
    <property type="match status" value="1"/>
</dbReference>
<dbReference type="PANTHER" id="PTHR11547:SF38">
    <property type="entry name" value="ARGININE KINASE 1-RELATED"/>
    <property type="match status" value="1"/>
</dbReference>
<dbReference type="PANTHER" id="PTHR11547">
    <property type="entry name" value="ARGININE OR CREATINE KINASE"/>
    <property type="match status" value="1"/>
</dbReference>
<dbReference type="Pfam" id="PF00217">
    <property type="entry name" value="ATP-gua_Ptrans"/>
    <property type="match status" value="1"/>
</dbReference>
<dbReference type="SUPFAM" id="SSF55931">
    <property type="entry name" value="Glutamine synthetase/guanido kinase"/>
    <property type="match status" value="1"/>
</dbReference>
<dbReference type="PROSITE" id="PS00112">
    <property type="entry name" value="PHOSPHAGEN_KINASE"/>
    <property type="match status" value="1"/>
</dbReference>
<dbReference type="PROSITE" id="PS51510">
    <property type="entry name" value="PHOSPHAGEN_KINASE_C"/>
    <property type="match status" value="1"/>
</dbReference>
<reference key="1">
    <citation type="journal article" date="2003" name="Nature">
        <title>Genome sequence of Bacillus cereus and comparative analysis with Bacillus anthracis.</title>
        <authorList>
            <person name="Ivanova N."/>
            <person name="Sorokin A."/>
            <person name="Anderson I."/>
            <person name="Galleron N."/>
            <person name="Candelon B."/>
            <person name="Kapatral V."/>
            <person name="Bhattacharyya A."/>
            <person name="Reznik G."/>
            <person name="Mikhailova N."/>
            <person name="Lapidus A."/>
            <person name="Chu L."/>
            <person name="Mazur M."/>
            <person name="Goltsman E."/>
            <person name="Larsen N."/>
            <person name="D'Souza M."/>
            <person name="Walunas T."/>
            <person name="Grechkin Y."/>
            <person name="Pusch G."/>
            <person name="Haselkorn R."/>
            <person name="Fonstein M."/>
            <person name="Ehrlich S.D."/>
            <person name="Overbeek R."/>
            <person name="Kyrpides N.C."/>
        </authorList>
    </citation>
    <scope>NUCLEOTIDE SEQUENCE [LARGE SCALE GENOMIC DNA]</scope>
    <source>
        <strain>ATCC 14579 / DSM 31 / CCUG 7414 / JCM 2152 / NBRC 15305 / NCIMB 9373 / NCTC 2599 / NRRL B-3711</strain>
    </source>
</reference>
<protein>
    <recommendedName>
        <fullName evidence="1">Protein-arginine kinase</fullName>
        <ecNumber evidence="1">2.7.14.1</ecNumber>
    </recommendedName>
</protein>
<evidence type="ECO:0000255" key="1">
    <source>
        <dbReference type="HAMAP-Rule" id="MF_00602"/>
    </source>
</evidence>
<feature type="chain" id="PRO_0000212013" description="Protein-arginine kinase">
    <location>
        <begin position="1"/>
        <end position="354"/>
    </location>
</feature>
<feature type="domain" description="Phosphagen kinase C-terminal" evidence="1">
    <location>
        <begin position="24"/>
        <end position="254"/>
    </location>
</feature>
<feature type="short sequence motif" description="RDXXRA motif of the pArg binding pocket involved in allosteric regulation" evidence="1">
    <location>
        <begin position="337"/>
        <end position="342"/>
    </location>
</feature>
<feature type="binding site" evidence="1">
    <location>
        <begin position="27"/>
        <end position="31"/>
    </location>
    <ligand>
        <name>ATP</name>
        <dbReference type="ChEBI" id="CHEBI:30616"/>
    </ligand>
</feature>
<feature type="binding site" evidence="1">
    <location>
        <position position="92"/>
    </location>
    <ligand>
        <name>ATP</name>
        <dbReference type="ChEBI" id="CHEBI:30616"/>
    </ligand>
</feature>
<feature type="binding site" evidence="1">
    <location>
        <position position="125"/>
    </location>
    <ligand>
        <name>ATP</name>
        <dbReference type="ChEBI" id="CHEBI:30616"/>
    </ligand>
</feature>
<feature type="binding site" evidence="1">
    <location>
        <begin position="176"/>
        <end position="180"/>
    </location>
    <ligand>
        <name>ATP</name>
        <dbReference type="ChEBI" id="CHEBI:30616"/>
    </ligand>
</feature>
<feature type="binding site" evidence="1">
    <location>
        <begin position="207"/>
        <end position="212"/>
    </location>
    <ligand>
        <name>ATP</name>
        <dbReference type="ChEBI" id="CHEBI:30616"/>
    </ligand>
</feature>
<gene>
    <name evidence="1" type="primary">mcsB</name>
    <name type="ordered locus">BC_0101</name>
</gene>
<accession>Q81J67</accession>
<comment type="function">
    <text evidence="1">Catalyzes the specific phosphorylation of arginine residues in a large number of proteins. Is part of the bacterial stress response system. Protein arginine phosphorylation has a physiologically important role and is involved in the regulation of many critical cellular processes, such as protein homeostasis, motility, competence, and stringent and stress responses, by regulating gene expression and protein activity.</text>
</comment>
<comment type="catalytic activity">
    <reaction evidence="1">
        <text>L-arginyl-[protein] + ATP = N(omega)-phospho-L-arginyl-[protein] + ADP + H(+)</text>
        <dbReference type="Rhea" id="RHEA:43384"/>
        <dbReference type="Rhea" id="RHEA-COMP:10532"/>
        <dbReference type="Rhea" id="RHEA-COMP:10533"/>
        <dbReference type="ChEBI" id="CHEBI:15378"/>
        <dbReference type="ChEBI" id="CHEBI:29965"/>
        <dbReference type="ChEBI" id="CHEBI:30616"/>
        <dbReference type="ChEBI" id="CHEBI:83226"/>
        <dbReference type="ChEBI" id="CHEBI:456216"/>
        <dbReference type="EC" id="2.7.14.1"/>
    </reaction>
</comment>
<comment type="activity regulation">
    <text evidence="1">Appears to be allosterically activated by the binding of pArg-containing polypeptides to the pArg-binding pocket localized in the C-terminal domain of McsB.</text>
</comment>
<comment type="similarity">
    <text evidence="1">Belongs to the ATP:guanido phosphotransferase family.</text>
</comment>
<organism>
    <name type="scientific">Bacillus cereus (strain ATCC 14579 / DSM 31 / CCUG 7414 / JCM 2152 / NBRC 15305 / NCIMB 9373 / NCTC 2599 / NRRL B-3711)</name>
    <dbReference type="NCBI Taxonomy" id="226900"/>
    <lineage>
        <taxon>Bacteria</taxon>
        <taxon>Bacillati</taxon>
        <taxon>Bacillota</taxon>
        <taxon>Bacilli</taxon>
        <taxon>Bacillales</taxon>
        <taxon>Bacillaceae</taxon>
        <taxon>Bacillus</taxon>
        <taxon>Bacillus cereus group</taxon>
    </lineage>
</organism>
<name>MCSB_BACCR</name>
<sequence length="354" mass="39869">MSLDKIMNEAISPWMKGDGPDSDIVLSSRIRLARNFKQYQFSTMQNEEEAQKVQELFKKKFINKAVEPFGKFGLLKMNELTPLQRRVLVEKHLISPNLAGTEYGACLLSESEHISVMLNEEDHIRIQCLFPGLQLSKALQSANQIDNWIEKEVEYAFDESLGYITSCPTNVGTGLRASVMIHLPGLVLTKRISRIIQVIQKLGLVVRGIYGEGSEALGNIFQVSNQMTLGKSEEDIIADLKSVMQQIIQQEKLARELIVQNSSIELEDKVYRSYGILANSRLIQSAEAATCLSDVRLGIDLGYIKGISRNILTELMVLTQPGILQQYAGGPLGPEERDYRRATLIRERLRIEKN</sequence>
<proteinExistence type="inferred from homology"/>